<reference key="1">
    <citation type="submission" date="1998-07" db="EMBL/GenBank/DDBJ databases">
        <title>The B. pertussis cspA gene locus.</title>
        <authorList>
            <person name="Fuchs T.M."/>
            <person name="Gross R."/>
        </authorList>
    </citation>
    <scope>NUCLEOTIDE SEQUENCE [GENOMIC DNA]</scope>
    <source>
        <strain>Tohama I / ATCC BAA-589 / NCTC 13251</strain>
    </source>
</reference>
<reference key="2">
    <citation type="journal article" date="2003" name="Nat. Genet.">
        <title>Comparative analysis of the genome sequences of Bordetella pertussis, Bordetella parapertussis and Bordetella bronchiseptica.</title>
        <authorList>
            <person name="Parkhill J."/>
            <person name="Sebaihia M."/>
            <person name="Preston A."/>
            <person name="Murphy L.D."/>
            <person name="Thomson N.R."/>
            <person name="Harris D.E."/>
            <person name="Holden M.T.G."/>
            <person name="Churcher C.M."/>
            <person name="Bentley S.D."/>
            <person name="Mungall K.L."/>
            <person name="Cerdeno-Tarraga A.-M."/>
            <person name="Temple L."/>
            <person name="James K.D."/>
            <person name="Harris B."/>
            <person name="Quail M.A."/>
            <person name="Achtman M."/>
            <person name="Atkin R."/>
            <person name="Baker S."/>
            <person name="Basham D."/>
            <person name="Bason N."/>
            <person name="Cherevach I."/>
            <person name="Chillingworth T."/>
            <person name="Collins M."/>
            <person name="Cronin A."/>
            <person name="Davis P."/>
            <person name="Doggett J."/>
            <person name="Feltwell T."/>
            <person name="Goble A."/>
            <person name="Hamlin N."/>
            <person name="Hauser H."/>
            <person name="Holroyd S."/>
            <person name="Jagels K."/>
            <person name="Leather S."/>
            <person name="Moule S."/>
            <person name="Norberczak H."/>
            <person name="O'Neil S."/>
            <person name="Ormond D."/>
            <person name="Price C."/>
            <person name="Rabbinowitsch E."/>
            <person name="Rutter S."/>
            <person name="Sanders M."/>
            <person name="Saunders D."/>
            <person name="Seeger K."/>
            <person name="Sharp S."/>
            <person name="Simmonds M."/>
            <person name="Skelton J."/>
            <person name="Squares R."/>
            <person name="Squares S."/>
            <person name="Stevens K."/>
            <person name="Unwin L."/>
            <person name="Whitehead S."/>
            <person name="Barrell B.G."/>
            <person name="Maskell D.J."/>
        </authorList>
    </citation>
    <scope>NUCLEOTIDE SEQUENCE [LARGE SCALE GENOMIC DNA]</scope>
    <source>
        <strain>Tohama I / ATCC BAA-589 / NCTC 13251</strain>
    </source>
</reference>
<sequence>METGVVKWFNAEKGYGFITPEAGGKDLFAHFSEIQANGFKSLEENQRVSFVTAMGPKGPQATKIQIL</sequence>
<accession>P0A352</accession>
<accession>Q9Z5R4</accession>
<organism>
    <name type="scientific">Bordetella pertussis (strain Tohama I / ATCC BAA-589 / NCTC 13251)</name>
    <dbReference type="NCBI Taxonomy" id="257313"/>
    <lineage>
        <taxon>Bacteria</taxon>
        <taxon>Pseudomonadati</taxon>
        <taxon>Pseudomonadota</taxon>
        <taxon>Betaproteobacteria</taxon>
        <taxon>Burkholderiales</taxon>
        <taxon>Alcaligenaceae</taxon>
        <taxon>Bordetella</taxon>
    </lineage>
</organism>
<name>CSPA_BORPE</name>
<proteinExistence type="inferred from homology"/>
<feature type="chain" id="PRO_0000100301" description="Cold shock-like protein CspA">
    <location>
        <begin position="1"/>
        <end position="67"/>
    </location>
</feature>
<feature type="domain" description="CSD">
    <location>
        <begin position="4"/>
        <end position="64"/>
    </location>
</feature>
<keyword id="KW-0010">Activator</keyword>
<keyword id="KW-0963">Cytoplasm</keyword>
<keyword id="KW-0238">DNA-binding</keyword>
<keyword id="KW-1185">Reference proteome</keyword>
<keyword id="KW-0804">Transcription</keyword>
<keyword id="KW-0805">Transcription regulation</keyword>
<evidence type="ECO:0000250" key="1"/>
<dbReference type="EMBL" id="AJ009835">
    <property type="protein sequence ID" value="CAB38009.1"/>
    <property type="molecule type" value="Genomic_DNA"/>
</dbReference>
<dbReference type="EMBL" id="BX640416">
    <property type="protein sequence ID" value="CAE42057.1"/>
    <property type="molecule type" value="Genomic_DNA"/>
</dbReference>
<dbReference type="RefSeq" id="NP_880481.1">
    <property type="nucleotide sequence ID" value="NC_002929.2"/>
</dbReference>
<dbReference type="RefSeq" id="WP_010930551.1">
    <property type="nucleotide sequence ID" value="NZ_CP039022.1"/>
</dbReference>
<dbReference type="SMR" id="P0A352"/>
<dbReference type="STRING" id="257313.BP1770"/>
<dbReference type="PaxDb" id="257313-BP1770"/>
<dbReference type="KEGG" id="bpe:BP1770"/>
<dbReference type="PATRIC" id="fig|257313.5.peg.1900"/>
<dbReference type="eggNOG" id="COG1278">
    <property type="taxonomic scope" value="Bacteria"/>
</dbReference>
<dbReference type="HOGENOM" id="CLU_117621_0_3_4"/>
<dbReference type="Proteomes" id="UP000002676">
    <property type="component" value="Chromosome"/>
</dbReference>
<dbReference type="GO" id="GO:0005829">
    <property type="term" value="C:cytosol"/>
    <property type="evidence" value="ECO:0007669"/>
    <property type="project" value="UniProtKB-ARBA"/>
</dbReference>
<dbReference type="GO" id="GO:0003677">
    <property type="term" value="F:DNA binding"/>
    <property type="evidence" value="ECO:0007669"/>
    <property type="project" value="UniProtKB-KW"/>
</dbReference>
<dbReference type="CDD" id="cd04458">
    <property type="entry name" value="CSP_CDS"/>
    <property type="match status" value="1"/>
</dbReference>
<dbReference type="FunFam" id="2.40.50.140:FF:000006">
    <property type="entry name" value="Cold shock protein CspC"/>
    <property type="match status" value="1"/>
</dbReference>
<dbReference type="Gene3D" id="2.40.50.140">
    <property type="entry name" value="Nucleic acid-binding proteins"/>
    <property type="match status" value="1"/>
</dbReference>
<dbReference type="InterPro" id="IPR012156">
    <property type="entry name" value="Cold_shock_CspA"/>
</dbReference>
<dbReference type="InterPro" id="IPR011129">
    <property type="entry name" value="CSD"/>
</dbReference>
<dbReference type="InterPro" id="IPR019844">
    <property type="entry name" value="CSD_CS"/>
</dbReference>
<dbReference type="InterPro" id="IPR002059">
    <property type="entry name" value="CSP_DNA-bd"/>
</dbReference>
<dbReference type="InterPro" id="IPR012340">
    <property type="entry name" value="NA-bd_OB-fold"/>
</dbReference>
<dbReference type="PANTHER" id="PTHR46565">
    <property type="entry name" value="COLD SHOCK DOMAIN PROTEIN 2"/>
    <property type="match status" value="1"/>
</dbReference>
<dbReference type="PANTHER" id="PTHR46565:SF20">
    <property type="entry name" value="COLD SHOCK DOMAIN-CONTAINING PROTEIN 4"/>
    <property type="match status" value="1"/>
</dbReference>
<dbReference type="Pfam" id="PF00313">
    <property type="entry name" value="CSD"/>
    <property type="match status" value="1"/>
</dbReference>
<dbReference type="PIRSF" id="PIRSF002599">
    <property type="entry name" value="Cold_shock_A"/>
    <property type="match status" value="1"/>
</dbReference>
<dbReference type="PRINTS" id="PR00050">
    <property type="entry name" value="COLDSHOCK"/>
</dbReference>
<dbReference type="SMART" id="SM00357">
    <property type="entry name" value="CSP"/>
    <property type="match status" value="1"/>
</dbReference>
<dbReference type="SUPFAM" id="SSF50249">
    <property type="entry name" value="Nucleic acid-binding proteins"/>
    <property type="match status" value="1"/>
</dbReference>
<dbReference type="PROSITE" id="PS00352">
    <property type="entry name" value="CSD_1"/>
    <property type="match status" value="1"/>
</dbReference>
<dbReference type="PROSITE" id="PS51857">
    <property type="entry name" value="CSD_2"/>
    <property type="match status" value="1"/>
</dbReference>
<gene>
    <name type="primary">cspA</name>
    <name type="ordered locus">BP1770</name>
</gene>
<protein>
    <recommendedName>
        <fullName>Cold shock-like protein CspA</fullName>
    </recommendedName>
</protein>
<comment type="subcellular location">
    <subcellularLocation>
        <location evidence="1">Cytoplasm</location>
    </subcellularLocation>
</comment>